<evidence type="ECO:0000250" key="1">
    <source>
        <dbReference type="UniProtKB" id="Q8LAU9"/>
    </source>
</evidence>
<evidence type="ECO:0000255" key="2">
    <source>
        <dbReference type="PROSITE-ProRule" id="PRU00094"/>
    </source>
</evidence>
<evidence type="ECO:0000255" key="3">
    <source>
        <dbReference type="PROSITE-ProRule" id="PRU00357"/>
    </source>
</evidence>
<evidence type="ECO:0000255" key="4">
    <source>
        <dbReference type="PROSITE-ProRule" id="PRU00650"/>
    </source>
</evidence>
<evidence type="ECO:0000256" key="5">
    <source>
        <dbReference type="SAM" id="MobiDB-lite"/>
    </source>
</evidence>
<evidence type="ECO:0000269" key="6">
    <source>
    </source>
</evidence>
<evidence type="ECO:0000303" key="7">
    <source>
    </source>
</evidence>
<evidence type="ECO:0000303" key="8">
    <source>
    </source>
</evidence>
<evidence type="ECO:0000305" key="9"/>
<evidence type="ECO:0000312" key="10">
    <source>
        <dbReference type="EMBL" id="BAD13061.1"/>
    </source>
</evidence>
<evidence type="ECO:0000312" key="11">
    <source>
        <dbReference type="EMBL" id="BAF07806.1"/>
    </source>
</evidence>
<comment type="function">
    <text evidence="1">Transcriptional activator that specifically binds 5'-GATA-3' or 5'-GAT-3' motifs within gene promoters.</text>
</comment>
<comment type="subcellular location">
    <subcellularLocation>
        <location evidence="3">Nucleus</location>
    </subcellularLocation>
</comment>
<comment type="induction">
    <text evidence="6">By drought and salt stresses.</text>
</comment>
<comment type="similarity">
    <text evidence="9">Belongs to the type IV zinc-finger family. Class C subfamily.</text>
</comment>
<name>GAT17_ORYSJ</name>
<protein>
    <recommendedName>
        <fullName evidence="7">GATA transcription factor 17</fullName>
        <shortName evidence="7">OsGATA17</shortName>
    </recommendedName>
    <alternativeName>
        <fullName evidence="9">Protein TIFY 2a</fullName>
        <shortName evidence="8">OsTIFY2a</shortName>
    </alternativeName>
</protein>
<proteinExistence type="evidence at transcript level"/>
<dbReference type="EMBL" id="EU847015">
    <property type="protein sequence ID" value="ACJ54918.1"/>
    <property type="molecule type" value="mRNA"/>
</dbReference>
<dbReference type="EMBL" id="AP005191">
    <property type="protein sequence ID" value="BAD13061.1"/>
    <property type="molecule type" value="Genomic_DNA"/>
</dbReference>
<dbReference type="EMBL" id="AP008208">
    <property type="protein sequence ID" value="BAF07806.1"/>
    <property type="molecule type" value="Genomic_DNA"/>
</dbReference>
<dbReference type="EMBL" id="AP014958">
    <property type="protein sequence ID" value="BAS76986.1"/>
    <property type="molecule type" value="Genomic_DNA"/>
</dbReference>
<dbReference type="EMBL" id="AK068931">
    <property type="protein sequence ID" value="BAG91167.1"/>
    <property type="molecule type" value="mRNA"/>
</dbReference>
<dbReference type="RefSeq" id="XP_015622990.1">
    <property type="nucleotide sequence ID" value="XM_015767504.1"/>
</dbReference>
<dbReference type="SMR" id="Q6Z433"/>
<dbReference type="FunCoup" id="Q6Z433">
    <property type="interactions" value="1002"/>
</dbReference>
<dbReference type="STRING" id="39947.Q6Z433"/>
<dbReference type="PaxDb" id="39947-Q6Z433"/>
<dbReference type="EnsemblPlants" id="Os02t0148500-01">
    <property type="protein sequence ID" value="Os02t0148500-01"/>
    <property type="gene ID" value="Os02g0148500"/>
</dbReference>
<dbReference type="Gramene" id="Os02t0148500-01">
    <property type="protein sequence ID" value="Os02t0148500-01"/>
    <property type="gene ID" value="Os02g0148500"/>
</dbReference>
<dbReference type="KEGG" id="dosa:Os02g0148500"/>
<dbReference type="eggNOG" id="KOG1601">
    <property type="taxonomic scope" value="Eukaryota"/>
</dbReference>
<dbReference type="HOGENOM" id="CLU_057264_0_0_1"/>
<dbReference type="InParanoid" id="Q6Z433"/>
<dbReference type="OMA" id="HGHEYAY"/>
<dbReference type="OrthoDB" id="2162994at2759"/>
<dbReference type="PlantReactome" id="R-OSA-6787011">
    <property type="pathway name" value="Jasmonic acid signaling"/>
</dbReference>
<dbReference type="Proteomes" id="UP000000763">
    <property type="component" value="Chromosome 2"/>
</dbReference>
<dbReference type="Proteomes" id="UP000059680">
    <property type="component" value="Chromosome 2"/>
</dbReference>
<dbReference type="GO" id="GO:0005634">
    <property type="term" value="C:nucleus"/>
    <property type="evidence" value="ECO:0007669"/>
    <property type="project" value="UniProtKB-SubCell"/>
</dbReference>
<dbReference type="GO" id="GO:0043565">
    <property type="term" value="F:sequence-specific DNA binding"/>
    <property type="evidence" value="ECO:0007669"/>
    <property type="project" value="InterPro"/>
</dbReference>
<dbReference type="GO" id="GO:0008270">
    <property type="term" value="F:zinc ion binding"/>
    <property type="evidence" value="ECO:0007669"/>
    <property type="project" value="UniProtKB-KW"/>
</dbReference>
<dbReference type="GO" id="GO:0006355">
    <property type="term" value="P:regulation of DNA-templated transcription"/>
    <property type="evidence" value="ECO:0007669"/>
    <property type="project" value="InterPro"/>
</dbReference>
<dbReference type="CDD" id="cd00202">
    <property type="entry name" value="ZnF_GATA"/>
    <property type="match status" value="1"/>
</dbReference>
<dbReference type="Gene3D" id="3.30.50.10">
    <property type="entry name" value="Erythroid Transcription Factor GATA-1, subunit A"/>
    <property type="match status" value="1"/>
</dbReference>
<dbReference type="InterPro" id="IPR010402">
    <property type="entry name" value="CCT_domain"/>
</dbReference>
<dbReference type="InterPro" id="IPR045280">
    <property type="entry name" value="TIFY-like"/>
</dbReference>
<dbReference type="InterPro" id="IPR010399">
    <property type="entry name" value="Tify_dom"/>
</dbReference>
<dbReference type="InterPro" id="IPR000679">
    <property type="entry name" value="Znf_GATA"/>
</dbReference>
<dbReference type="InterPro" id="IPR013088">
    <property type="entry name" value="Znf_NHR/GATA"/>
</dbReference>
<dbReference type="PANTHER" id="PTHR46125:SF9">
    <property type="entry name" value="GATA TRANSCRIPTION FACTOR 17"/>
    <property type="match status" value="1"/>
</dbReference>
<dbReference type="PANTHER" id="PTHR46125">
    <property type="entry name" value="GATA TRANSCRIPTION FACTOR 28"/>
    <property type="match status" value="1"/>
</dbReference>
<dbReference type="Pfam" id="PF06203">
    <property type="entry name" value="CCT"/>
    <property type="match status" value="1"/>
</dbReference>
<dbReference type="Pfam" id="PF00320">
    <property type="entry name" value="GATA"/>
    <property type="match status" value="1"/>
</dbReference>
<dbReference type="Pfam" id="PF06200">
    <property type="entry name" value="tify"/>
    <property type="match status" value="1"/>
</dbReference>
<dbReference type="SMART" id="SM00979">
    <property type="entry name" value="TIFY"/>
    <property type="match status" value="1"/>
</dbReference>
<dbReference type="SMART" id="SM00401">
    <property type="entry name" value="ZnF_GATA"/>
    <property type="match status" value="1"/>
</dbReference>
<dbReference type="SUPFAM" id="SSF57716">
    <property type="entry name" value="Glucocorticoid receptor-like (DNA-binding domain)"/>
    <property type="match status" value="1"/>
</dbReference>
<dbReference type="PROSITE" id="PS51017">
    <property type="entry name" value="CCT"/>
    <property type="match status" value="1"/>
</dbReference>
<dbReference type="PROSITE" id="PS00344">
    <property type="entry name" value="GATA_ZN_FINGER_1"/>
    <property type="match status" value="1"/>
</dbReference>
<dbReference type="PROSITE" id="PS50114">
    <property type="entry name" value="GATA_ZN_FINGER_2"/>
    <property type="match status" value="1"/>
</dbReference>
<dbReference type="PROSITE" id="PS51320">
    <property type="entry name" value="TIFY"/>
    <property type="match status" value="1"/>
</dbReference>
<feature type="chain" id="PRO_0000434833" description="GATA transcription factor 17">
    <location>
        <begin position="1"/>
        <end position="328"/>
    </location>
</feature>
<feature type="domain" description="Tify" evidence="4">
    <location>
        <begin position="100"/>
        <end position="135"/>
    </location>
</feature>
<feature type="domain" description="CCT" evidence="3">
    <location>
        <begin position="161"/>
        <end position="203"/>
    </location>
</feature>
<feature type="zinc finger region" description="GATA-type" evidence="2">
    <location>
        <begin position="236"/>
        <end position="263"/>
    </location>
</feature>
<feature type="region of interest" description="Disordered" evidence="5">
    <location>
        <begin position="1"/>
        <end position="68"/>
    </location>
</feature>
<feature type="region of interest" description="Disordered" evidence="5">
    <location>
        <begin position="198"/>
        <end position="231"/>
    </location>
</feature>
<feature type="compositionally biased region" description="Low complexity" evidence="5">
    <location>
        <begin position="14"/>
        <end position="29"/>
    </location>
</feature>
<feature type="compositionally biased region" description="Acidic residues" evidence="5">
    <location>
        <begin position="30"/>
        <end position="39"/>
    </location>
</feature>
<feature type="compositionally biased region" description="Acidic residues" evidence="5">
    <location>
        <begin position="47"/>
        <end position="63"/>
    </location>
</feature>
<organism>
    <name type="scientific">Oryza sativa subsp. japonica</name>
    <name type="common">Rice</name>
    <dbReference type="NCBI Taxonomy" id="39947"/>
    <lineage>
        <taxon>Eukaryota</taxon>
        <taxon>Viridiplantae</taxon>
        <taxon>Streptophyta</taxon>
        <taxon>Embryophyta</taxon>
        <taxon>Tracheophyta</taxon>
        <taxon>Spermatophyta</taxon>
        <taxon>Magnoliopsida</taxon>
        <taxon>Liliopsida</taxon>
        <taxon>Poales</taxon>
        <taxon>Poaceae</taxon>
        <taxon>BOP clade</taxon>
        <taxon>Oryzoideae</taxon>
        <taxon>Oryzeae</taxon>
        <taxon>Oryzinae</taxon>
        <taxon>Oryza</taxon>
        <taxon>Oryza sativa</taxon>
    </lineage>
</organism>
<reference key="1">
    <citation type="submission" date="2008-06" db="EMBL/GenBank/DDBJ databases">
        <title>Molecular cloning of GATA zinc finger protein gene in rice.</title>
        <authorList>
            <person name="Yoon U.H."/>
            <person name="Kim Y.H."/>
        </authorList>
    </citation>
    <scope>NUCLEOTIDE SEQUENCE [MRNA]</scope>
    <source>
        <strain>cv. Ilpoombyeo</strain>
    </source>
</reference>
<reference key="2">
    <citation type="journal article" date="2005" name="Nature">
        <title>The map-based sequence of the rice genome.</title>
        <authorList>
            <consortium name="International rice genome sequencing project (IRGSP)"/>
        </authorList>
    </citation>
    <scope>NUCLEOTIDE SEQUENCE [LARGE SCALE GENOMIC DNA]</scope>
    <source>
        <strain>cv. Nipponbare</strain>
    </source>
</reference>
<reference key="3">
    <citation type="journal article" date="2008" name="Nucleic Acids Res.">
        <title>The rice annotation project database (RAP-DB): 2008 update.</title>
        <authorList>
            <consortium name="The rice annotation project (RAP)"/>
        </authorList>
    </citation>
    <scope>GENOME REANNOTATION</scope>
    <source>
        <strain>cv. Nipponbare</strain>
    </source>
</reference>
<reference key="4">
    <citation type="journal article" date="2013" name="Rice">
        <title>Improvement of the Oryza sativa Nipponbare reference genome using next generation sequence and optical map data.</title>
        <authorList>
            <person name="Kawahara Y."/>
            <person name="de la Bastide M."/>
            <person name="Hamilton J.P."/>
            <person name="Kanamori H."/>
            <person name="McCombie W.R."/>
            <person name="Ouyang S."/>
            <person name="Schwartz D.C."/>
            <person name="Tanaka T."/>
            <person name="Wu J."/>
            <person name="Zhou S."/>
            <person name="Childs K.L."/>
            <person name="Davidson R.M."/>
            <person name="Lin H."/>
            <person name="Quesada-Ocampo L."/>
            <person name="Vaillancourt B."/>
            <person name="Sakai H."/>
            <person name="Lee S.S."/>
            <person name="Kim J."/>
            <person name="Numa H."/>
            <person name="Itoh T."/>
            <person name="Buell C.R."/>
            <person name="Matsumoto T."/>
        </authorList>
    </citation>
    <scope>GENOME REANNOTATION</scope>
    <source>
        <strain>cv. Nipponbare</strain>
    </source>
</reference>
<reference key="5">
    <citation type="journal article" date="2003" name="Science">
        <title>Collection, mapping, and annotation of over 28,000 cDNA clones from japonica rice.</title>
        <authorList>
            <consortium name="The rice full-length cDNA consortium"/>
        </authorList>
    </citation>
    <scope>NUCLEOTIDE SEQUENCE [LARGE SCALE MRNA]</scope>
    <source>
        <strain>cv. Nipponbare</strain>
    </source>
</reference>
<reference key="6">
    <citation type="journal article" date="2004" name="Plant Physiol.">
        <title>The GATA family of transcription factors in Arabidopsis and rice.</title>
        <authorList>
            <person name="Reyes J.C."/>
            <person name="Muro-Pastor M.I."/>
            <person name="Florencio F.J."/>
        </authorList>
    </citation>
    <scope>GENE FAMILY</scope>
    <scope>NOMENCLATURE</scope>
</reference>
<reference key="7">
    <citation type="journal article" date="2009" name="Plant Mol. Biol.">
        <title>Identification and expression profiling analysis of TIFY family genes involved in stress and phytohormone responses in rice.</title>
        <authorList>
            <person name="Ye H."/>
            <person name="Du H."/>
            <person name="Tang N."/>
            <person name="Li X."/>
            <person name="Xiong L."/>
        </authorList>
    </citation>
    <scope>GENE FAMILY</scope>
    <scope>NOMENCLATURE</scope>
    <scope>INDUCTION</scope>
</reference>
<keyword id="KW-0010">Activator</keyword>
<keyword id="KW-0238">DNA-binding</keyword>
<keyword id="KW-0479">Metal-binding</keyword>
<keyword id="KW-0539">Nucleus</keyword>
<keyword id="KW-1185">Reference proteome</keyword>
<keyword id="KW-0804">Transcription</keyword>
<keyword id="KW-0805">Transcription regulation</keyword>
<keyword id="KW-0862">Zinc</keyword>
<keyword id="KW-0863">Zinc-finger</keyword>
<gene>
    <name evidence="7" type="primary">GATA17</name>
    <name evidence="8" type="synonym">TIFY2A</name>
    <name evidence="11" type="ordered locus">Os02g0148500</name>
    <name evidence="9" type="ordered locus">LOC_Os02g05510</name>
    <name evidence="10" type="ORF">P0479D12.16</name>
</gene>
<accession>Q6Z433</accession>
<accession>A0A0P0VEW3</accession>
<sequence>MSGHHEAKPYQPRRGPAPADEEAAPAAAADEAEAEAEVEAMERYEQEQEYEEGEEGEEEEYEGGEGVPMDADASAAAVAGMDPHGEMVPVAGGEAGGGYPHVASNTLTLSFQGEVYVFESVSAERVQAVLLLLGGRELAPGSGSVPSSSAAYSKKMNFPHRMASLMRFREKRKERNFDKKIRYTVRKEVALRMQRNRGQFTSSKSKAEEATSVITSSEGSPNWGAVEGRPPSAAECHHCGISAASTPMMRRGPDGPRTLCNACGLMWANKGTMREVTKGPPVPLQIVPAATNDVQNGIVEATGVEQHNSAVEEAVSAANGHESQSGVA</sequence>